<reference key="1">
    <citation type="journal article" date="2002" name="Nature">
        <title>The genome sequence of Schizosaccharomyces pombe.</title>
        <authorList>
            <person name="Wood V."/>
            <person name="Gwilliam R."/>
            <person name="Rajandream M.A."/>
            <person name="Lyne M.H."/>
            <person name="Lyne R."/>
            <person name="Stewart A."/>
            <person name="Sgouros J.G."/>
            <person name="Peat N."/>
            <person name="Hayles J."/>
            <person name="Baker S.G."/>
            <person name="Basham D."/>
            <person name="Bowman S."/>
            <person name="Brooks K."/>
            <person name="Brown D."/>
            <person name="Brown S."/>
            <person name="Chillingworth T."/>
            <person name="Churcher C.M."/>
            <person name="Collins M."/>
            <person name="Connor R."/>
            <person name="Cronin A."/>
            <person name="Davis P."/>
            <person name="Feltwell T."/>
            <person name="Fraser A."/>
            <person name="Gentles S."/>
            <person name="Goble A."/>
            <person name="Hamlin N."/>
            <person name="Harris D.E."/>
            <person name="Hidalgo J."/>
            <person name="Hodgson G."/>
            <person name="Holroyd S."/>
            <person name="Hornsby T."/>
            <person name="Howarth S."/>
            <person name="Huckle E.J."/>
            <person name="Hunt S."/>
            <person name="Jagels K."/>
            <person name="James K.D."/>
            <person name="Jones L."/>
            <person name="Jones M."/>
            <person name="Leather S."/>
            <person name="McDonald S."/>
            <person name="McLean J."/>
            <person name="Mooney P."/>
            <person name="Moule S."/>
            <person name="Mungall K.L."/>
            <person name="Murphy L.D."/>
            <person name="Niblett D."/>
            <person name="Odell C."/>
            <person name="Oliver K."/>
            <person name="O'Neil S."/>
            <person name="Pearson D."/>
            <person name="Quail M.A."/>
            <person name="Rabbinowitsch E."/>
            <person name="Rutherford K.M."/>
            <person name="Rutter S."/>
            <person name="Saunders D."/>
            <person name="Seeger K."/>
            <person name="Sharp S."/>
            <person name="Skelton J."/>
            <person name="Simmonds M.N."/>
            <person name="Squares R."/>
            <person name="Squares S."/>
            <person name="Stevens K."/>
            <person name="Taylor K."/>
            <person name="Taylor R.G."/>
            <person name="Tivey A."/>
            <person name="Walsh S.V."/>
            <person name="Warren T."/>
            <person name="Whitehead S."/>
            <person name="Woodward J.R."/>
            <person name="Volckaert G."/>
            <person name="Aert R."/>
            <person name="Robben J."/>
            <person name="Grymonprez B."/>
            <person name="Weltjens I."/>
            <person name="Vanstreels E."/>
            <person name="Rieger M."/>
            <person name="Schaefer M."/>
            <person name="Mueller-Auer S."/>
            <person name="Gabel C."/>
            <person name="Fuchs M."/>
            <person name="Duesterhoeft A."/>
            <person name="Fritzc C."/>
            <person name="Holzer E."/>
            <person name="Moestl D."/>
            <person name="Hilbert H."/>
            <person name="Borzym K."/>
            <person name="Langer I."/>
            <person name="Beck A."/>
            <person name="Lehrach H."/>
            <person name="Reinhardt R."/>
            <person name="Pohl T.M."/>
            <person name="Eger P."/>
            <person name="Zimmermann W."/>
            <person name="Wedler H."/>
            <person name="Wambutt R."/>
            <person name="Purnelle B."/>
            <person name="Goffeau A."/>
            <person name="Cadieu E."/>
            <person name="Dreano S."/>
            <person name="Gloux S."/>
            <person name="Lelaure V."/>
            <person name="Mottier S."/>
            <person name="Galibert F."/>
            <person name="Aves S.J."/>
            <person name="Xiang Z."/>
            <person name="Hunt C."/>
            <person name="Moore K."/>
            <person name="Hurst S.M."/>
            <person name="Lucas M."/>
            <person name="Rochet M."/>
            <person name="Gaillardin C."/>
            <person name="Tallada V.A."/>
            <person name="Garzon A."/>
            <person name="Thode G."/>
            <person name="Daga R.R."/>
            <person name="Cruzado L."/>
            <person name="Jimenez J."/>
            <person name="Sanchez M."/>
            <person name="del Rey F."/>
            <person name="Benito J."/>
            <person name="Dominguez A."/>
            <person name="Revuelta J.L."/>
            <person name="Moreno S."/>
            <person name="Armstrong J."/>
            <person name="Forsburg S.L."/>
            <person name="Cerutti L."/>
            <person name="Lowe T."/>
            <person name="McCombie W.R."/>
            <person name="Paulsen I."/>
            <person name="Potashkin J."/>
            <person name="Shpakovski G.V."/>
            <person name="Ussery D."/>
            <person name="Barrell B.G."/>
            <person name="Nurse P."/>
        </authorList>
    </citation>
    <scope>NUCLEOTIDE SEQUENCE [LARGE SCALE GENOMIC DNA]</scope>
    <source>
        <strain>972 / ATCC 24843</strain>
    </source>
</reference>
<gene>
    <name type="ORF">SPAC1142.09</name>
    <name type="ORF">SPAC8C9.02</name>
</gene>
<dbReference type="EMBL" id="CU329670">
    <property type="protein sequence ID" value="CAB77016.2"/>
    <property type="molecule type" value="Genomic_DNA"/>
</dbReference>
<dbReference type="PIR" id="T39139">
    <property type="entry name" value="T39139"/>
</dbReference>
<dbReference type="RefSeq" id="NP_594273.2">
    <property type="nucleotide sequence ID" value="NM_001019696.1"/>
</dbReference>
<dbReference type="PaxDb" id="4896-SPAC1142.09.1"/>
<dbReference type="EnsemblFungi" id="SPAC1142.09.1">
    <property type="protein sequence ID" value="SPAC1142.09.1:pep"/>
    <property type="gene ID" value="SPAC1142.09"/>
</dbReference>
<dbReference type="KEGG" id="spo:2543033"/>
<dbReference type="PomBase" id="SPAC1142.09"/>
<dbReference type="VEuPathDB" id="FungiDB:SPAC1142.09"/>
<dbReference type="HOGENOM" id="CLU_2110388_0_0_1"/>
<dbReference type="InParanoid" id="Q9P7F5"/>
<dbReference type="PRO" id="PR:Q9P7F5"/>
<dbReference type="Proteomes" id="UP000002485">
    <property type="component" value="Chromosome I"/>
</dbReference>
<sequence length="115" mass="13474">MEDSLLLSVNISDSLFTFSLKPLFSQYRKHIYFNDCFYSTFNKTKTIIVVILSGKLSDLIDFKSYIEFVLKTNNSYSAILISYYRCIFIISLFHRPLTIHFLTNLTHGCTRSFTK</sequence>
<organism>
    <name type="scientific">Schizosaccharomyces pombe (strain 972 / ATCC 24843)</name>
    <name type="common">Fission yeast</name>
    <dbReference type="NCBI Taxonomy" id="284812"/>
    <lineage>
        <taxon>Eukaryota</taxon>
        <taxon>Fungi</taxon>
        <taxon>Dikarya</taxon>
        <taxon>Ascomycota</taxon>
        <taxon>Taphrinomycotina</taxon>
        <taxon>Schizosaccharomycetes</taxon>
        <taxon>Schizosaccharomycetales</taxon>
        <taxon>Schizosaccharomycetaceae</taxon>
        <taxon>Schizosaccharomyces</taxon>
    </lineage>
</organism>
<proteinExistence type="predicted"/>
<protein>
    <recommendedName>
        <fullName>Uncharacterized protein C1142.09</fullName>
    </recommendedName>
</protein>
<accession>Q9P7F5</accession>
<accession>O14271</accession>
<keyword id="KW-1185">Reference proteome</keyword>
<feature type="chain" id="PRO_0000116836" description="Uncharacterized protein C1142.09">
    <location>
        <begin position="1"/>
        <end position="115"/>
    </location>
</feature>
<name>YKY9_SCHPO</name>